<sequence length="205" mass="23784">MQGFVLLISGPSGAGKSTLLKKLFDEFEDELYFSISSTTRKPREGEKNGIHYHFISHEEFQKGIDSDHFLEWARVHENFYGTSLKHTQNALDNGKIVVFDIDVQGFKIARKKMADKIVSVFITTKNKDELKKRLIKRNTDTIIQLEKRLQNASDEMKELSEYDYLIINDELKQSYEALRAILIAHKFRTKGQNLGQIQNIWNEGE</sequence>
<accession>Q5HTT7</accession>
<name>KGUA_CAMJR</name>
<keyword id="KW-0067">ATP-binding</keyword>
<keyword id="KW-0963">Cytoplasm</keyword>
<keyword id="KW-0418">Kinase</keyword>
<keyword id="KW-0547">Nucleotide-binding</keyword>
<keyword id="KW-0808">Transferase</keyword>
<evidence type="ECO:0000255" key="1">
    <source>
        <dbReference type="HAMAP-Rule" id="MF_00328"/>
    </source>
</evidence>
<organism>
    <name type="scientific">Campylobacter jejuni (strain RM1221)</name>
    <dbReference type="NCBI Taxonomy" id="195099"/>
    <lineage>
        <taxon>Bacteria</taxon>
        <taxon>Pseudomonadati</taxon>
        <taxon>Campylobacterota</taxon>
        <taxon>Epsilonproteobacteria</taxon>
        <taxon>Campylobacterales</taxon>
        <taxon>Campylobacteraceae</taxon>
        <taxon>Campylobacter</taxon>
    </lineage>
</organism>
<reference key="1">
    <citation type="journal article" date="2005" name="PLoS Biol.">
        <title>Major structural differences and novel potential virulence mechanisms from the genomes of multiple Campylobacter species.</title>
        <authorList>
            <person name="Fouts D.E."/>
            <person name="Mongodin E.F."/>
            <person name="Mandrell R.E."/>
            <person name="Miller W.G."/>
            <person name="Rasko D.A."/>
            <person name="Ravel J."/>
            <person name="Brinkac L.M."/>
            <person name="DeBoy R.T."/>
            <person name="Parker C.T."/>
            <person name="Daugherty S.C."/>
            <person name="Dodson R.J."/>
            <person name="Durkin A.S."/>
            <person name="Madupu R."/>
            <person name="Sullivan S.A."/>
            <person name="Shetty J.U."/>
            <person name="Ayodeji M.A."/>
            <person name="Shvartsbeyn A."/>
            <person name="Schatz M.C."/>
            <person name="Badger J.H."/>
            <person name="Fraser C.M."/>
            <person name="Nelson K.E."/>
        </authorList>
    </citation>
    <scope>NUCLEOTIDE SEQUENCE [LARGE SCALE GENOMIC DNA]</scope>
    <source>
        <strain>RM1221</strain>
    </source>
</reference>
<gene>
    <name evidence="1" type="primary">gmk</name>
    <name type="ordered locus">CJE1311</name>
</gene>
<protein>
    <recommendedName>
        <fullName evidence="1">Guanylate kinase</fullName>
        <ecNumber evidence="1">2.7.4.8</ecNumber>
    </recommendedName>
    <alternativeName>
        <fullName evidence="1">GMP kinase</fullName>
    </alternativeName>
</protein>
<proteinExistence type="inferred from homology"/>
<feature type="chain" id="PRO_0000266300" description="Guanylate kinase">
    <location>
        <begin position="1"/>
        <end position="205"/>
    </location>
</feature>
<feature type="domain" description="Guanylate kinase-like" evidence="1">
    <location>
        <begin position="3"/>
        <end position="183"/>
    </location>
</feature>
<feature type="binding site" evidence="1">
    <location>
        <begin position="10"/>
        <end position="17"/>
    </location>
    <ligand>
        <name>ATP</name>
        <dbReference type="ChEBI" id="CHEBI:30616"/>
    </ligand>
</feature>
<dbReference type="EC" id="2.7.4.8" evidence="1"/>
<dbReference type="EMBL" id="CP000025">
    <property type="protein sequence ID" value="AAW35632.1"/>
    <property type="molecule type" value="Genomic_DNA"/>
</dbReference>
<dbReference type="SMR" id="Q5HTT7"/>
<dbReference type="KEGG" id="cjr:CJE1311"/>
<dbReference type="HOGENOM" id="CLU_001715_1_2_7"/>
<dbReference type="GO" id="GO:0005829">
    <property type="term" value="C:cytosol"/>
    <property type="evidence" value="ECO:0007669"/>
    <property type="project" value="TreeGrafter"/>
</dbReference>
<dbReference type="GO" id="GO:0005524">
    <property type="term" value="F:ATP binding"/>
    <property type="evidence" value="ECO:0007669"/>
    <property type="project" value="UniProtKB-UniRule"/>
</dbReference>
<dbReference type="GO" id="GO:0004385">
    <property type="term" value="F:guanylate kinase activity"/>
    <property type="evidence" value="ECO:0007669"/>
    <property type="project" value="UniProtKB-UniRule"/>
</dbReference>
<dbReference type="CDD" id="cd00071">
    <property type="entry name" value="GMPK"/>
    <property type="match status" value="1"/>
</dbReference>
<dbReference type="FunFam" id="3.30.63.10:FF:000002">
    <property type="entry name" value="Guanylate kinase 1"/>
    <property type="match status" value="1"/>
</dbReference>
<dbReference type="Gene3D" id="3.30.63.10">
    <property type="entry name" value="Guanylate Kinase phosphate binding domain"/>
    <property type="match status" value="1"/>
</dbReference>
<dbReference type="Gene3D" id="3.40.50.300">
    <property type="entry name" value="P-loop containing nucleotide triphosphate hydrolases"/>
    <property type="match status" value="1"/>
</dbReference>
<dbReference type="HAMAP" id="MF_00328">
    <property type="entry name" value="Guanylate_kinase"/>
    <property type="match status" value="1"/>
</dbReference>
<dbReference type="InterPro" id="IPR008145">
    <property type="entry name" value="GK/Ca_channel_bsu"/>
</dbReference>
<dbReference type="InterPro" id="IPR008144">
    <property type="entry name" value="Guanylate_kin-like_dom"/>
</dbReference>
<dbReference type="InterPro" id="IPR017665">
    <property type="entry name" value="Guanylate_kinase"/>
</dbReference>
<dbReference type="InterPro" id="IPR020590">
    <property type="entry name" value="Guanylate_kinase_CS"/>
</dbReference>
<dbReference type="InterPro" id="IPR027417">
    <property type="entry name" value="P-loop_NTPase"/>
</dbReference>
<dbReference type="NCBIfam" id="TIGR03263">
    <property type="entry name" value="guanyl_kin"/>
    <property type="match status" value="1"/>
</dbReference>
<dbReference type="PANTHER" id="PTHR23117:SF13">
    <property type="entry name" value="GUANYLATE KINASE"/>
    <property type="match status" value="1"/>
</dbReference>
<dbReference type="PANTHER" id="PTHR23117">
    <property type="entry name" value="GUANYLATE KINASE-RELATED"/>
    <property type="match status" value="1"/>
</dbReference>
<dbReference type="Pfam" id="PF00625">
    <property type="entry name" value="Guanylate_kin"/>
    <property type="match status" value="1"/>
</dbReference>
<dbReference type="SMART" id="SM00072">
    <property type="entry name" value="GuKc"/>
    <property type="match status" value="1"/>
</dbReference>
<dbReference type="SUPFAM" id="SSF52540">
    <property type="entry name" value="P-loop containing nucleoside triphosphate hydrolases"/>
    <property type="match status" value="1"/>
</dbReference>
<dbReference type="PROSITE" id="PS00856">
    <property type="entry name" value="GUANYLATE_KINASE_1"/>
    <property type="match status" value="1"/>
</dbReference>
<dbReference type="PROSITE" id="PS50052">
    <property type="entry name" value="GUANYLATE_KINASE_2"/>
    <property type="match status" value="1"/>
</dbReference>
<comment type="function">
    <text evidence="1">Essential for recycling GMP and indirectly, cGMP.</text>
</comment>
<comment type="catalytic activity">
    <reaction evidence="1">
        <text>GMP + ATP = GDP + ADP</text>
        <dbReference type="Rhea" id="RHEA:20780"/>
        <dbReference type="ChEBI" id="CHEBI:30616"/>
        <dbReference type="ChEBI" id="CHEBI:58115"/>
        <dbReference type="ChEBI" id="CHEBI:58189"/>
        <dbReference type="ChEBI" id="CHEBI:456216"/>
        <dbReference type="EC" id="2.7.4.8"/>
    </reaction>
</comment>
<comment type="subcellular location">
    <subcellularLocation>
        <location evidence="1">Cytoplasm</location>
    </subcellularLocation>
</comment>
<comment type="similarity">
    <text evidence="1">Belongs to the guanylate kinase family.</text>
</comment>